<gene>
    <name evidence="10" type="ORF">AgaP_AGAP000150</name>
</gene>
<proteinExistence type="evidence at protein level"/>
<keyword id="KW-0085">Behavior</keyword>
<keyword id="KW-1185">Reference proteome</keyword>
<keyword id="KW-0964">Secreted</keyword>
<keyword id="KW-0732">Signal</keyword>
<protein>
    <recommendedName>
        <fullName evidence="5 6 7">Salivary protein gSG6</fullName>
    </recommendedName>
</protein>
<sequence length="115" mass="13055">MAIRVELLLAMVLLPLLLLESVVPHAAAEKVWVDRDNVYCGHLDCTRVATFKGERFCTLCDTRHFCECKETREPLPYMYACPGTEPCQSSDRLGSCSKSMHDVLCDRIDQAFLEQ</sequence>
<evidence type="ECO:0000255" key="1"/>
<evidence type="ECO:0000269" key="2">
    <source>
    </source>
</evidence>
<evidence type="ECO:0000269" key="3">
    <source>
    </source>
</evidence>
<evidence type="ECO:0000269" key="4">
    <source>
    </source>
</evidence>
<evidence type="ECO:0000303" key="5">
    <source>
    </source>
</evidence>
<evidence type="ECO:0000303" key="6">
    <source>
    </source>
</evidence>
<evidence type="ECO:0000303" key="7">
    <source>
    </source>
</evidence>
<evidence type="ECO:0000305" key="8"/>
<evidence type="ECO:0000312" key="9">
    <source>
        <dbReference type="EMBL" id="CAC35522.1"/>
    </source>
</evidence>
<evidence type="ECO:0000312" key="10">
    <source>
        <dbReference type="EMBL" id="EAA06422.2"/>
    </source>
</evidence>
<evidence type="ECO:0000312" key="11">
    <source>
        <dbReference type="Proteomes" id="UP000007062"/>
    </source>
</evidence>
<feature type="signal peptide" evidence="1">
    <location>
        <begin position="1"/>
        <end position="28"/>
    </location>
</feature>
<feature type="chain" id="PRO_5004324164" description="Salivary protein gSG6" evidence="1">
    <location>
        <begin position="29"/>
        <end position="115"/>
    </location>
</feature>
<feature type="sequence conflict" description="In Ref. 2; CAC35522." evidence="8" ref="2">
    <original>H</original>
    <variation>Y</variation>
    <location>
        <position position="25"/>
    </location>
</feature>
<feature type="sequence conflict" description="In Ref. 2; CAC35522." evidence="8" ref="2">
    <original>N</original>
    <variation>K</variation>
    <location>
        <position position="37"/>
    </location>
</feature>
<accession>Q7PRX9</accession>
<accession>Q9BIH5</accession>
<name>GSG6_ANOGA</name>
<dbReference type="EMBL" id="AAAB01008846">
    <property type="protein sequence ID" value="EAA06422.2"/>
    <property type="molecule type" value="Genomic_DNA"/>
</dbReference>
<dbReference type="EMBL" id="AJ302657">
    <property type="protein sequence ID" value="CAC35522.1"/>
    <property type="molecule type" value="mRNA"/>
</dbReference>
<dbReference type="RefSeq" id="XP_310990.1">
    <property type="nucleotide sequence ID" value="XM_310990.2"/>
</dbReference>
<dbReference type="STRING" id="7165.Q7PRX9"/>
<dbReference type="PaxDb" id="7165-AGAP000150-PA"/>
<dbReference type="EnsemblMetazoa" id="AGAP000150-RA">
    <property type="protein sequence ID" value="AGAP000150-PA"/>
    <property type="gene ID" value="AGAP000150"/>
</dbReference>
<dbReference type="KEGG" id="aga:1272113"/>
<dbReference type="VEuPathDB" id="VectorBase:AGAMI1_003678"/>
<dbReference type="VEuPathDB" id="VectorBase:AGAP000150"/>
<dbReference type="HOGENOM" id="CLU_2110938_0_0_1"/>
<dbReference type="OMA" id="RHFCECK"/>
<dbReference type="Proteomes" id="UP000007062">
    <property type="component" value="Chromosome X"/>
</dbReference>
<dbReference type="GO" id="GO:0005576">
    <property type="term" value="C:extracellular region"/>
    <property type="evidence" value="ECO:0007669"/>
    <property type="project" value="UniProtKB-SubCell"/>
</dbReference>
<comment type="function">
    <text evidence="4">Required for efficient probing and blood feeding.</text>
</comment>
<comment type="subcellular location">
    <subcellularLocation>
        <location evidence="2 4">Secreted</location>
    </subcellularLocation>
</comment>
<comment type="tissue specificity">
    <text evidence="2 4">Female saliva (at protein level) (PubMed:17913537, PubMed:19442731). Distal-lateral lobes of female salivary gland (at protein level) (PubMed:19442731). Not detected in male salivary gland (at protein level) (PubMed:19442731).</text>
</comment>
<comment type="developmental stage">
    <text evidence="4">Expression is absent during pre-adult stages, starting in young adult females and reaching a maximum 3 to 5 days after emergence (at protein level) (PubMed:19442731). A slight progressive decrease of expression levels is observed with mosquito aging in the absence of blood-feeding (at protein level) (PubMed:19442731). Substantial drop in the levels is observed in 3-day-old females shortly after blood meal (at protein level) (PubMed:19442731). After blood meal expression is back to high levels in a couple of days (at protein level) (PubMed:19442731).</text>
</comment>
<comment type="disruption phenotype">
    <text evidence="4">RNAi-mediated knockdown results in increased probing time and slightly lower rates of successful blood feeding.</text>
</comment>
<comment type="miscellaneous">
    <text evidence="3 6">Immunogenic; elicits antibody response in individuals exposed to Anopheles mosquito bites (PubMed:18575604). May serve as a marker for evaluating exposure to Anopheles gambiae bites (PubMed:18575604).</text>
</comment>
<organism evidence="10">
    <name type="scientific">Anopheles gambiae</name>
    <name type="common">African malaria mosquito</name>
    <dbReference type="NCBI Taxonomy" id="7165"/>
    <lineage>
        <taxon>Eukaryota</taxon>
        <taxon>Metazoa</taxon>
        <taxon>Ecdysozoa</taxon>
        <taxon>Arthropoda</taxon>
        <taxon>Hexapoda</taxon>
        <taxon>Insecta</taxon>
        <taxon>Pterygota</taxon>
        <taxon>Neoptera</taxon>
        <taxon>Endopterygota</taxon>
        <taxon>Diptera</taxon>
        <taxon>Nematocera</taxon>
        <taxon>Culicoidea</taxon>
        <taxon>Culicidae</taxon>
        <taxon>Anophelinae</taxon>
        <taxon>Anopheles</taxon>
    </lineage>
</organism>
<reference evidence="11" key="1">
    <citation type="journal article" date="2002" name="Science">
        <title>The genome sequence of the malaria mosquito Anopheles gambiae.</title>
        <authorList>
            <person name="Holt R.A."/>
            <person name="Subramanian G.M."/>
            <person name="Halpern A."/>
            <person name="Sutton G.G."/>
            <person name="Charlab R."/>
            <person name="Nusskern D.R."/>
            <person name="Wincker P."/>
            <person name="Clark A.G."/>
            <person name="Ribeiro J.M.C."/>
            <person name="Wides R."/>
            <person name="Salzberg S.L."/>
            <person name="Loftus B.J."/>
            <person name="Yandell M.D."/>
            <person name="Majoros W.H."/>
            <person name="Rusch D.B."/>
            <person name="Lai Z."/>
            <person name="Kraft C.L."/>
            <person name="Abril J.F."/>
            <person name="Anthouard V."/>
            <person name="Arensburger P."/>
            <person name="Atkinson P.W."/>
            <person name="Baden H."/>
            <person name="de Berardinis V."/>
            <person name="Baldwin D."/>
            <person name="Benes V."/>
            <person name="Biedler J."/>
            <person name="Blass C."/>
            <person name="Bolanos R."/>
            <person name="Boscus D."/>
            <person name="Barnstead M."/>
            <person name="Cai S."/>
            <person name="Center A."/>
            <person name="Chaturverdi K."/>
            <person name="Christophides G.K."/>
            <person name="Chrystal M.A.M."/>
            <person name="Clamp M."/>
            <person name="Cravchik A."/>
            <person name="Curwen V."/>
            <person name="Dana A."/>
            <person name="Delcher A."/>
            <person name="Dew I."/>
            <person name="Evans C.A."/>
            <person name="Flanigan M."/>
            <person name="Grundschober-Freimoser A."/>
            <person name="Friedli L."/>
            <person name="Gu Z."/>
            <person name="Guan P."/>
            <person name="Guigo R."/>
            <person name="Hillenmeyer M.E."/>
            <person name="Hladun S.L."/>
            <person name="Hogan J.R."/>
            <person name="Hong Y.S."/>
            <person name="Hoover J."/>
            <person name="Jaillon O."/>
            <person name="Ke Z."/>
            <person name="Kodira C.D."/>
            <person name="Kokoza E."/>
            <person name="Koutsos A."/>
            <person name="Letunic I."/>
            <person name="Levitsky A.A."/>
            <person name="Liang Y."/>
            <person name="Lin J.-J."/>
            <person name="Lobo N.F."/>
            <person name="Lopez J.R."/>
            <person name="Malek J.A."/>
            <person name="McIntosh T.C."/>
            <person name="Meister S."/>
            <person name="Miller J.R."/>
            <person name="Mobarry C."/>
            <person name="Mongin E."/>
            <person name="Murphy S.D."/>
            <person name="O'Brochta D.A."/>
            <person name="Pfannkoch C."/>
            <person name="Qi R."/>
            <person name="Regier M.A."/>
            <person name="Remington K."/>
            <person name="Shao H."/>
            <person name="Sharakhova M.V."/>
            <person name="Sitter C.D."/>
            <person name="Shetty J."/>
            <person name="Smith T.J."/>
            <person name="Strong R."/>
            <person name="Sun J."/>
            <person name="Thomasova D."/>
            <person name="Ton L.Q."/>
            <person name="Topalis P."/>
            <person name="Tu Z.J."/>
            <person name="Unger M.F."/>
            <person name="Walenz B."/>
            <person name="Wang A.H."/>
            <person name="Wang J."/>
            <person name="Wang M."/>
            <person name="Wang X."/>
            <person name="Woodford K.J."/>
            <person name="Wortman J.R."/>
            <person name="Wu M."/>
            <person name="Yao A."/>
            <person name="Zdobnov E.M."/>
            <person name="Zhang H."/>
            <person name="Zhao Q."/>
            <person name="Zhao S."/>
            <person name="Zhu S.C."/>
            <person name="Zhimulev I."/>
            <person name="Coluzzi M."/>
            <person name="della Torre A."/>
            <person name="Roth C.W."/>
            <person name="Louis C."/>
            <person name="Kalush F."/>
            <person name="Mural R.J."/>
            <person name="Myers E.W."/>
            <person name="Adams M.D."/>
            <person name="Smith H.O."/>
            <person name="Broder S."/>
            <person name="Gardner M.J."/>
            <person name="Fraser C.M."/>
            <person name="Birney E."/>
            <person name="Bork P."/>
            <person name="Brey P.T."/>
            <person name="Venter J.C."/>
            <person name="Weissenbach J."/>
            <person name="Kafatos F.C."/>
            <person name="Collins F.H."/>
            <person name="Hoffman S.L."/>
        </authorList>
    </citation>
    <scope>NUCLEOTIDE SEQUENCE [LARGE SCALE GENOMIC DNA]</scope>
    <source>
        <strain evidence="11">PEST</strain>
    </source>
</reference>
<reference evidence="9" key="2">
    <citation type="journal article" date="2002" name="FEBS Lett.">
        <title>Novel cDNAs encoding salivary proteins from the malaria vector Anopheles gambiae.</title>
        <authorList>
            <person name="Lanfrancotti A."/>
            <person name="Lombardo F."/>
            <person name="Santolamazza F."/>
            <person name="Veneri M."/>
            <person name="Castrignano T."/>
            <person name="Coluzzi M."/>
            <person name="Arca' B."/>
        </authorList>
    </citation>
    <scope>NUCLEOTIDE SEQUENCE [LARGE SCALE MRNA]</scope>
    <source>
        <strain evidence="9">Gasua</strain>
        <tissue evidence="9">Salivary gland</tissue>
    </source>
</reference>
<reference evidence="8" key="3">
    <citation type="journal article" date="2007" name="Microbes Infect.">
        <title>Antibody response against saliva antigens of Anopheles gambiae and Aedes aegypti in travellers in tropical Africa.</title>
        <authorList>
            <person name="Orlandi-Pradines E."/>
            <person name="Almeras L."/>
            <person name="Denis de Senneville L."/>
            <person name="Barbe S."/>
            <person name="Remoue F."/>
            <person name="Villard C."/>
            <person name="Cornelie S."/>
            <person name="Penhoat K."/>
            <person name="Pascual A."/>
            <person name="Bourgouin C."/>
            <person name="Fontenille D."/>
            <person name="Bonnet J."/>
            <person name="Corre-Catelin N."/>
            <person name="Reiter P."/>
            <person name="Pages F."/>
            <person name="Laffite D."/>
            <person name="Boulanger D."/>
            <person name="Simondon F."/>
            <person name="Pradines B."/>
            <person name="Fusai T."/>
            <person name="Rogier C."/>
        </authorList>
    </citation>
    <scope>IDENTIFICATION BY MASS SPECTROMETRY</scope>
    <scope>SUBCELLULAR LOCATION</scope>
    <scope>TISSUE SPECIFICITY</scope>
</reference>
<reference evidence="8" key="4">
    <citation type="journal article" date="2008" name="PLoS ONE">
        <title>Novel peptide marker corresponding to salivary protein gSG6 potentially identifies exposure to Anopheles bites.</title>
        <authorList>
            <person name="Poinsignon A."/>
            <person name="Cornelie S."/>
            <person name="Mestres-Simon M."/>
            <person name="Lanfrancotti A."/>
            <person name="Rossignol M."/>
            <person name="Boulanger D."/>
            <person name="Cisse B."/>
            <person name="Sokhna C."/>
            <person name="Arca B."/>
            <person name="Simondon F."/>
            <person name="Remoue F."/>
        </authorList>
    </citation>
    <scope>IMMUNOGENIC PROPERTIES</scope>
</reference>
<reference evidence="8" key="5">
    <citation type="journal article" date="2009" name="Insect Biochem. Mol. Biol.">
        <title>The Anopheles gambiae salivary protein gSG6: an anopheline-specific protein with a blood-feeding role.</title>
        <authorList>
            <person name="Lombardo F."/>
            <person name="Ronca R."/>
            <person name="Rizzo C."/>
            <person name="Mestres-Simon M."/>
            <person name="Lanfrancotti A."/>
            <person name="Curra C."/>
            <person name="Fiorentino G."/>
            <person name="Bourgouin C."/>
            <person name="Ribeiro J.M."/>
            <person name="Petrarca V."/>
            <person name="Ponzi M."/>
            <person name="Coluzzi M."/>
            <person name="Arca B."/>
        </authorList>
    </citation>
    <scope>FUNCTION</scope>
    <scope>SUBCELLULAR LOCATION</scope>
    <scope>TISSUE SPECIFICITY</scope>
    <scope>DEVELOPMENTAL STAGE</scope>
    <scope>DISRUPTION PHENOTYPE</scope>
</reference>